<gene>
    <name evidence="1" type="primary">pckA</name>
    <name type="ordered locus">Z4758</name>
    <name type="ordered locus">ECs4245</name>
</gene>
<name>PCKA_ECO57</name>
<feature type="chain" id="PRO_0000203820" description="Phosphoenolpyruvate carboxykinase (ATP)">
    <location>
        <begin position="1"/>
        <end position="540"/>
    </location>
</feature>
<feature type="binding site" evidence="1">
    <location>
        <position position="65"/>
    </location>
    <ligand>
        <name>substrate</name>
    </ligand>
</feature>
<feature type="binding site" evidence="1">
    <location>
        <position position="207"/>
    </location>
    <ligand>
        <name>substrate</name>
    </ligand>
</feature>
<feature type="binding site" evidence="1">
    <location>
        <position position="213"/>
    </location>
    <ligand>
        <name>ATP</name>
        <dbReference type="ChEBI" id="CHEBI:30616"/>
    </ligand>
</feature>
<feature type="binding site" evidence="1">
    <location>
        <position position="213"/>
    </location>
    <ligand>
        <name>Mn(2+)</name>
        <dbReference type="ChEBI" id="CHEBI:29035"/>
    </ligand>
</feature>
<feature type="binding site" evidence="1">
    <location>
        <position position="213"/>
    </location>
    <ligand>
        <name>substrate</name>
    </ligand>
</feature>
<feature type="binding site" evidence="1">
    <location>
        <position position="232"/>
    </location>
    <ligand>
        <name>ATP</name>
        <dbReference type="ChEBI" id="CHEBI:30616"/>
    </ligand>
</feature>
<feature type="binding site" evidence="1">
    <location>
        <position position="232"/>
    </location>
    <ligand>
        <name>Mn(2+)</name>
        <dbReference type="ChEBI" id="CHEBI:29035"/>
    </ligand>
</feature>
<feature type="binding site" evidence="1">
    <location>
        <begin position="248"/>
        <end position="256"/>
    </location>
    <ligand>
        <name>ATP</name>
        <dbReference type="ChEBI" id="CHEBI:30616"/>
    </ligand>
</feature>
<feature type="binding site" evidence="1">
    <location>
        <position position="269"/>
    </location>
    <ligand>
        <name>Mn(2+)</name>
        <dbReference type="ChEBI" id="CHEBI:29035"/>
    </ligand>
</feature>
<feature type="binding site" evidence="1">
    <location>
        <position position="297"/>
    </location>
    <ligand>
        <name>ATP</name>
        <dbReference type="ChEBI" id="CHEBI:30616"/>
    </ligand>
</feature>
<feature type="binding site" evidence="1">
    <location>
        <position position="333"/>
    </location>
    <ligand>
        <name>ATP</name>
        <dbReference type="ChEBI" id="CHEBI:30616"/>
    </ligand>
</feature>
<feature type="binding site" evidence="1">
    <location>
        <position position="333"/>
    </location>
    <ligand>
        <name>substrate</name>
    </ligand>
</feature>
<feature type="binding site" evidence="1">
    <location>
        <begin position="449"/>
        <end position="450"/>
    </location>
    <ligand>
        <name>ATP</name>
        <dbReference type="ChEBI" id="CHEBI:30616"/>
    </ligand>
</feature>
<feature type="binding site" evidence="1">
    <location>
        <position position="455"/>
    </location>
    <ligand>
        <name>ATP</name>
        <dbReference type="ChEBI" id="CHEBI:30616"/>
    </ligand>
</feature>
<feature type="modified residue" description="N6-acetyllysine" evidence="1">
    <location>
        <position position="87"/>
    </location>
</feature>
<feature type="modified residue" description="N6-acetyllysine" evidence="1">
    <location>
        <position position="523"/>
    </location>
</feature>
<evidence type="ECO:0000255" key="1">
    <source>
        <dbReference type="HAMAP-Rule" id="MF_00453"/>
    </source>
</evidence>
<dbReference type="EC" id="4.1.1.49" evidence="1"/>
<dbReference type="EMBL" id="AE005174">
    <property type="protein sequence ID" value="AAG58504.1"/>
    <property type="molecule type" value="Genomic_DNA"/>
</dbReference>
<dbReference type="EMBL" id="BA000007">
    <property type="protein sequence ID" value="BAB37668.1"/>
    <property type="molecule type" value="Genomic_DNA"/>
</dbReference>
<dbReference type="PIR" id="D86005">
    <property type="entry name" value="D86005"/>
</dbReference>
<dbReference type="PIR" id="E91159">
    <property type="entry name" value="E91159"/>
</dbReference>
<dbReference type="RefSeq" id="WP_001301499.1">
    <property type="nucleotide sequence ID" value="NZ_VOAI01000004.1"/>
</dbReference>
<dbReference type="SMR" id="Q8X733"/>
<dbReference type="STRING" id="155864.Z4758"/>
<dbReference type="KEGG" id="ece:Z4758"/>
<dbReference type="KEGG" id="ecs:ECs_4245"/>
<dbReference type="PATRIC" id="fig|386585.9.peg.4433"/>
<dbReference type="eggNOG" id="COG1866">
    <property type="taxonomic scope" value="Bacteria"/>
</dbReference>
<dbReference type="HOGENOM" id="CLU_018247_0_1_6"/>
<dbReference type="OMA" id="MRYAGEM"/>
<dbReference type="UniPathway" id="UPA00138"/>
<dbReference type="Proteomes" id="UP000000558">
    <property type="component" value="Chromosome"/>
</dbReference>
<dbReference type="Proteomes" id="UP000002519">
    <property type="component" value="Chromosome"/>
</dbReference>
<dbReference type="GO" id="GO:0005829">
    <property type="term" value="C:cytosol"/>
    <property type="evidence" value="ECO:0007669"/>
    <property type="project" value="TreeGrafter"/>
</dbReference>
<dbReference type="GO" id="GO:0005524">
    <property type="term" value="F:ATP binding"/>
    <property type="evidence" value="ECO:0007669"/>
    <property type="project" value="UniProtKB-UniRule"/>
</dbReference>
<dbReference type="GO" id="GO:0046872">
    <property type="term" value="F:metal ion binding"/>
    <property type="evidence" value="ECO:0007669"/>
    <property type="project" value="UniProtKB-KW"/>
</dbReference>
<dbReference type="GO" id="GO:0004612">
    <property type="term" value="F:phosphoenolpyruvate carboxykinase (ATP) activity"/>
    <property type="evidence" value="ECO:0007669"/>
    <property type="project" value="UniProtKB-UniRule"/>
</dbReference>
<dbReference type="GO" id="GO:0006094">
    <property type="term" value="P:gluconeogenesis"/>
    <property type="evidence" value="ECO:0007669"/>
    <property type="project" value="UniProtKB-UniRule"/>
</dbReference>
<dbReference type="CDD" id="cd00484">
    <property type="entry name" value="PEPCK_ATP"/>
    <property type="match status" value="1"/>
</dbReference>
<dbReference type="FunFam" id="2.170.8.10:FF:000001">
    <property type="entry name" value="Phosphoenolpyruvate carboxykinase (ATP)"/>
    <property type="match status" value="1"/>
</dbReference>
<dbReference type="FunFam" id="3.40.449.10:FF:000001">
    <property type="entry name" value="Phosphoenolpyruvate carboxykinase (ATP)"/>
    <property type="match status" value="1"/>
</dbReference>
<dbReference type="Gene3D" id="3.90.228.20">
    <property type="match status" value="1"/>
</dbReference>
<dbReference type="Gene3D" id="3.40.449.10">
    <property type="entry name" value="Phosphoenolpyruvate Carboxykinase, domain 1"/>
    <property type="match status" value="1"/>
</dbReference>
<dbReference type="Gene3D" id="2.170.8.10">
    <property type="entry name" value="Phosphoenolpyruvate Carboxykinase, domain 2"/>
    <property type="match status" value="1"/>
</dbReference>
<dbReference type="HAMAP" id="MF_00453">
    <property type="entry name" value="PEPCK_ATP"/>
    <property type="match status" value="1"/>
</dbReference>
<dbReference type="InterPro" id="IPR001272">
    <property type="entry name" value="PEP_carboxykinase_ATP"/>
</dbReference>
<dbReference type="InterPro" id="IPR013035">
    <property type="entry name" value="PEP_carboxykinase_C"/>
</dbReference>
<dbReference type="InterPro" id="IPR008210">
    <property type="entry name" value="PEP_carboxykinase_N"/>
</dbReference>
<dbReference type="InterPro" id="IPR015994">
    <property type="entry name" value="PEPCK_ATP_CS"/>
</dbReference>
<dbReference type="NCBIfam" id="TIGR00224">
    <property type="entry name" value="pckA"/>
    <property type="match status" value="1"/>
</dbReference>
<dbReference type="NCBIfam" id="NF006819">
    <property type="entry name" value="PRK09344.1-1"/>
    <property type="match status" value="1"/>
</dbReference>
<dbReference type="NCBIfam" id="NF006820">
    <property type="entry name" value="PRK09344.1-2"/>
    <property type="match status" value="1"/>
</dbReference>
<dbReference type="NCBIfam" id="NF006821">
    <property type="entry name" value="PRK09344.1-3"/>
    <property type="match status" value="1"/>
</dbReference>
<dbReference type="PANTHER" id="PTHR30031:SF0">
    <property type="entry name" value="PHOSPHOENOLPYRUVATE CARBOXYKINASE (ATP)"/>
    <property type="match status" value="1"/>
</dbReference>
<dbReference type="PANTHER" id="PTHR30031">
    <property type="entry name" value="PHOSPHOENOLPYRUVATE CARBOXYKINASE ATP"/>
    <property type="match status" value="1"/>
</dbReference>
<dbReference type="Pfam" id="PF01293">
    <property type="entry name" value="PEPCK_ATP"/>
    <property type="match status" value="1"/>
</dbReference>
<dbReference type="PIRSF" id="PIRSF006294">
    <property type="entry name" value="PEP_crbxkin"/>
    <property type="match status" value="1"/>
</dbReference>
<dbReference type="SUPFAM" id="SSF68923">
    <property type="entry name" value="PEP carboxykinase N-terminal domain"/>
    <property type="match status" value="1"/>
</dbReference>
<dbReference type="SUPFAM" id="SSF53795">
    <property type="entry name" value="PEP carboxykinase-like"/>
    <property type="match status" value="1"/>
</dbReference>
<dbReference type="PROSITE" id="PS00532">
    <property type="entry name" value="PEPCK_ATP"/>
    <property type="match status" value="1"/>
</dbReference>
<keyword id="KW-0007">Acetylation</keyword>
<keyword id="KW-0067">ATP-binding</keyword>
<keyword id="KW-0963">Cytoplasm</keyword>
<keyword id="KW-0210">Decarboxylase</keyword>
<keyword id="KW-0312">Gluconeogenesis</keyword>
<keyword id="KW-0456">Lyase</keyword>
<keyword id="KW-0464">Manganese</keyword>
<keyword id="KW-0479">Metal-binding</keyword>
<keyword id="KW-0547">Nucleotide-binding</keyword>
<keyword id="KW-1185">Reference proteome</keyword>
<protein>
    <recommendedName>
        <fullName evidence="1">Phosphoenolpyruvate carboxykinase (ATP)</fullName>
        <shortName evidence="1">PCK</shortName>
        <shortName evidence="1">PEP carboxykinase</shortName>
        <shortName evidence="1">PEPCK</shortName>
        <ecNumber evidence="1">4.1.1.49</ecNumber>
    </recommendedName>
</protein>
<comment type="function">
    <text evidence="1">Involved in the gluconeogenesis. Catalyzes the conversion of oxaloacetate (OAA) to phosphoenolpyruvate (PEP) through direct phosphoryl transfer between the nucleoside triphosphate and OAA.</text>
</comment>
<comment type="catalytic activity">
    <reaction evidence="1">
        <text>oxaloacetate + ATP = phosphoenolpyruvate + ADP + CO2</text>
        <dbReference type="Rhea" id="RHEA:18617"/>
        <dbReference type="ChEBI" id="CHEBI:16452"/>
        <dbReference type="ChEBI" id="CHEBI:16526"/>
        <dbReference type="ChEBI" id="CHEBI:30616"/>
        <dbReference type="ChEBI" id="CHEBI:58702"/>
        <dbReference type="ChEBI" id="CHEBI:456216"/>
        <dbReference type="EC" id="4.1.1.49"/>
    </reaction>
</comment>
<comment type="cofactor">
    <cofactor evidence="1">
        <name>Mn(2+)</name>
        <dbReference type="ChEBI" id="CHEBI:29035"/>
    </cofactor>
    <text evidence="1">Binds 1 Mn(2+) ion per subunit.</text>
</comment>
<comment type="pathway">
    <text evidence="1">Carbohydrate biosynthesis; gluconeogenesis.</text>
</comment>
<comment type="subunit">
    <text evidence="1">Monomer.</text>
</comment>
<comment type="subcellular location">
    <subcellularLocation>
        <location evidence="1">Cytoplasm</location>
    </subcellularLocation>
</comment>
<comment type="similarity">
    <text evidence="1">Belongs to the phosphoenolpyruvate carboxykinase (ATP) family.</text>
</comment>
<sequence length="540" mass="59645">MRVNNGLTPQELEAYGISDVHDIVYNPSYDLLYQEELDPSLTGYERGVLTNLGAVAVDTGIFTGRSPKDKYIVRDDTTRDTFWWADKGKGKNDNKPLSPETWQHLKGLVTKQLSGKRLFVVDAFCGANPDTRLSVRFITEVAWQAHFVKNMFIRPSDEELAGFKPDFIVMNGAKCTNPQWKEQGLNSENFVAFNLTERMQLIGGTWYGGEMKKGMFSMMNYLLPLKGIASMHCSANVSEKGDVAVFFGLSGTGKTTLSTDPKRRLIGDDEHGWDDDGVFNFEGGCYAKTIKLSKEAEPEIYNAIRRDALLENVTVREDGTIDFDDGSKTENTRVSYPIYHIDNIVKPVSKAGHATKVIFLTADAFGVLPPVSRLTADQTQYHFLSGFTAKLAGTERGITEPTPTFSACFGAAFLSLHPTQYAEVLVKRMQAAGAQAYLVNTGWNGTGKRISIKDTRAIIDAILNGSLDNAETFTLPMFNLAIPTELPGVDTKILDPRNTYASPEQWQEKAETLAKLFIDNFDKYTDTPAGAALVAAGPKL</sequence>
<reference key="1">
    <citation type="journal article" date="2001" name="Nature">
        <title>Genome sequence of enterohaemorrhagic Escherichia coli O157:H7.</title>
        <authorList>
            <person name="Perna N.T."/>
            <person name="Plunkett G. III"/>
            <person name="Burland V."/>
            <person name="Mau B."/>
            <person name="Glasner J.D."/>
            <person name="Rose D.J."/>
            <person name="Mayhew G.F."/>
            <person name="Evans P.S."/>
            <person name="Gregor J."/>
            <person name="Kirkpatrick H.A."/>
            <person name="Posfai G."/>
            <person name="Hackett J."/>
            <person name="Klink S."/>
            <person name="Boutin A."/>
            <person name="Shao Y."/>
            <person name="Miller L."/>
            <person name="Grotbeck E.J."/>
            <person name="Davis N.W."/>
            <person name="Lim A."/>
            <person name="Dimalanta E.T."/>
            <person name="Potamousis K."/>
            <person name="Apodaca J."/>
            <person name="Anantharaman T.S."/>
            <person name="Lin J."/>
            <person name="Yen G."/>
            <person name="Schwartz D.C."/>
            <person name="Welch R.A."/>
            <person name="Blattner F.R."/>
        </authorList>
    </citation>
    <scope>NUCLEOTIDE SEQUENCE [LARGE SCALE GENOMIC DNA]</scope>
    <source>
        <strain>O157:H7 / EDL933 / ATCC 700927 / EHEC</strain>
    </source>
</reference>
<reference key="2">
    <citation type="journal article" date="2001" name="DNA Res.">
        <title>Complete genome sequence of enterohemorrhagic Escherichia coli O157:H7 and genomic comparison with a laboratory strain K-12.</title>
        <authorList>
            <person name="Hayashi T."/>
            <person name="Makino K."/>
            <person name="Ohnishi M."/>
            <person name="Kurokawa K."/>
            <person name="Ishii K."/>
            <person name="Yokoyama K."/>
            <person name="Han C.-G."/>
            <person name="Ohtsubo E."/>
            <person name="Nakayama K."/>
            <person name="Murata T."/>
            <person name="Tanaka M."/>
            <person name="Tobe T."/>
            <person name="Iida T."/>
            <person name="Takami H."/>
            <person name="Honda T."/>
            <person name="Sasakawa C."/>
            <person name="Ogasawara N."/>
            <person name="Yasunaga T."/>
            <person name="Kuhara S."/>
            <person name="Shiba T."/>
            <person name="Hattori M."/>
            <person name="Shinagawa H."/>
        </authorList>
    </citation>
    <scope>NUCLEOTIDE SEQUENCE [LARGE SCALE GENOMIC DNA]</scope>
    <source>
        <strain>O157:H7 / Sakai / RIMD 0509952 / EHEC</strain>
    </source>
</reference>
<proteinExistence type="inferred from homology"/>
<organism>
    <name type="scientific">Escherichia coli O157:H7</name>
    <dbReference type="NCBI Taxonomy" id="83334"/>
    <lineage>
        <taxon>Bacteria</taxon>
        <taxon>Pseudomonadati</taxon>
        <taxon>Pseudomonadota</taxon>
        <taxon>Gammaproteobacteria</taxon>
        <taxon>Enterobacterales</taxon>
        <taxon>Enterobacteriaceae</taxon>
        <taxon>Escherichia</taxon>
    </lineage>
</organism>
<accession>Q8X733</accession>